<keyword id="KW-0687">Ribonucleoprotein</keyword>
<keyword id="KW-0689">Ribosomal protein</keyword>
<keyword id="KW-0694">RNA-binding</keyword>
<keyword id="KW-0699">rRNA-binding</keyword>
<name>RS3_LISMF</name>
<accession>Q71WF2</accession>
<comment type="function">
    <text evidence="1">Binds the lower part of the 30S subunit head. Binds mRNA in the 70S ribosome, positioning it for translation.</text>
</comment>
<comment type="subunit">
    <text evidence="1">Part of the 30S ribosomal subunit. Forms a tight complex with proteins S10 and S14.</text>
</comment>
<comment type="similarity">
    <text evidence="1">Belongs to the universal ribosomal protein uS3 family.</text>
</comment>
<proteinExistence type="inferred from homology"/>
<protein>
    <recommendedName>
        <fullName evidence="1">Small ribosomal subunit protein uS3</fullName>
    </recommendedName>
    <alternativeName>
        <fullName evidence="2">30S ribosomal protein S3</fullName>
    </alternativeName>
</protein>
<evidence type="ECO:0000255" key="1">
    <source>
        <dbReference type="HAMAP-Rule" id="MF_01309"/>
    </source>
</evidence>
<evidence type="ECO:0000305" key="2"/>
<reference key="1">
    <citation type="journal article" date="2004" name="Nucleic Acids Res.">
        <title>Whole genome comparisons of serotype 4b and 1/2a strains of the food-borne pathogen Listeria monocytogenes reveal new insights into the core genome components of this species.</title>
        <authorList>
            <person name="Nelson K.E."/>
            <person name="Fouts D.E."/>
            <person name="Mongodin E.F."/>
            <person name="Ravel J."/>
            <person name="DeBoy R.T."/>
            <person name="Kolonay J.F."/>
            <person name="Rasko D.A."/>
            <person name="Angiuoli S.V."/>
            <person name="Gill S.R."/>
            <person name="Paulsen I.T."/>
            <person name="Peterson J.D."/>
            <person name="White O."/>
            <person name="Nelson W.C."/>
            <person name="Nierman W.C."/>
            <person name="Beanan M.J."/>
            <person name="Brinkac L.M."/>
            <person name="Daugherty S.C."/>
            <person name="Dodson R.J."/>
            <person name="Durkin A.S."/>
            <person name="Madupu R."/>
            <person name="Haft D.H."/>
            <person name="Selengut J."/>
            <person name="Van Aken S.E."/>
            <person name="Khouri H.M."/>
            <person name="Fedorova N."/>
            <person name="Forberger H.A."/>
            <person name="Tran B."/>
            <person name="Kathariou S."/>
            <person name="Wonderling L.D."/>
            <person name="Uhlich G.A."/>
            <person name="Bayles D.O."/>
            <person name="Luchansky J.B."/>
            <person name="Fraser C.M."/>
        </authorList>
    </citation>
    <scope>NUCLEOTIDE SEQUENCE [LARGE SCALE GENOMIC DNA]</scope>
    <source>
        <strain>F2365</strain>
    </source>
</reference>
<dbReference type="EMBL" id="AE017262">
    <property type="protein sequence ID" value="AAT05364.1"/>
    <property type="molecule type" value="Genomic_DNA"/>
</dbReference>
<dbReference type="RefSeq" id="WP_003720944.1">
    <property type="nucleotide sequence ID" value="NC_002973.6"/>
</dbReference>
<dbReference type="SMR" id="Q71WF2"/>
<dbReference type="GeneID" id="93240507"/>
<dbReference type="KEGG" id="lmf:LMOf2365_2599"/>
<dbReference type="HOGENOM" id="CLU_058591_0_2_9"/>
<dbReference type="GO" id="GO:0022627">
    <property type="term" value="C:cytosolic small ribosomal subunit"/>
    <property type="evidence" value="ECO:0007669"/>
    <property type="project" value="TreeGrafter"/>
</dbReference>
<dbReference type="GO" id="GO:0003729">
    <property type="term" value="F:mRNA binding"/>
    <property type="evidence" value="ECO:0007669"/>
    <property type="project" value="UniProtKB-UniRule"/>
</dbReference>
<dbReference type="GO" id="GO:0019843">
    <property type="term" value="F:rRNA binding"/>
    <property type="evidence" value="ECO:0007669"/>
    <property type="project" value="UniProtKB-UniRule"/>
</dbReference>
<dbReference type="GO" id="GO:0003735">
    <property type="term" value="F:structural constituent of ribosome"/>
    <property type="evidence" value="ECO:0007669"/>
    <property type="project" value="InterPro"/>
</dbReference>
<dbReference type="GO" id="GO:0006412">
    <property type="term" value="P:translation"/>
    <property type="evidence" value="ECO:0007669"/>
    <property type="project" value="UniProtKB-UniRule"/>
</dbReference>
<dbReference type="CDD" id="cd02412">
    <property type="entry name" value="KH-II_30S_S3"/>
    <property type="match status" value="1"/>
</dbReference>
<dbReference type="FunFam" id="3.30.1140.32:FF:000001">
    <property type="entry name" value="30S ribosomal protein S3"/>
    <property type="match status" value="1"/>
</dbReference>
<dbReference type="FunFam" id="3.30.300.20:FF:000001">
    <property type="entry name" value="30S ribosomal protein S3"/>
    <property type="match status" value="1"/>
</dbReference>
<dbReference type="Gene3D" id="3.30.300.20">
    <property type="match status" value="1"/>
</dbReference>
<dbReference type="Gene3D" id="3.30.1140.32">
    <property type="entry name" value="Ribosomal protein S3, C-terminal domain"/>
    <property type="match status" value="1"/>
</dbReference>
<dbReference type="HAMAP" id="MF_01309_B">
    <property type="entry name" value="Ribosomal_uS3_B"/>
    <property type="match status" value="1"/>
</dbReference>
<dbReference type="InterPro" id="IPR004087">
    <property type="entry name" value="KH_dom"/>
</dbReference>
<dbReference type="InterPro" id="IPR015946">
    <property type="entry name" value="KH_dom-like_a/b"/>
</dbReference>
<dbReference type="InterPro" id="IPR004044">
    <property type="entry name" value="KH_dom_type_2"/>
</dbReference>
<dbReference type="InterPro" id="IPR009019">
    <property type="entry name" value="KH_sf_prok-type"/>
</dbReference>
<dbReference type="InterPro" id="IPR036419">
    <property type="entry name" value="Ribosomal_S3_C_sf"/>
</dbReference>
<dbReference type="InterPro" id="IPR005704">
    <property type="entry name" value="Ribosomal_uS3_bac-typ"/>
</dbReference>
<dbReference type="InterPro" id="IPR001351">
    <property type="entry name" value="Ribosomal_uS3_C"/>
</dbReference>
<dbReference type="InterPro" id="IPR018280">
    <property type="entry name" value="Ribosomal_uS3_CS"/>
</dbReference>
<dbReference type="NCBIfam" id="TIGR01009">
    <property type="entry name" value="rpsC_bact"/>
    <property type="match status" value="1"/>
</dbReference>
<dbReference type="PANTHER" id="PTHR11760">
    <property type="entry name" value="30S/40S RIBOSOMAL PROTEIN S3"/>
    <property type="match status" value="1"/>
</dbReference>
<dbReference type="PANTHER" id="PTHR11760:SF19">
    <property type="entry name" value="SMALL RIBOSOMAL SUBUNIT PROTEIN US3C"/>
    <property type="match status" value="1"/>
</dbReference>
<dbReference type="Pfam" id="PF07650">
    <property type="entry name" value="KH_2"/>
    <property type="match status" value="1"/>
</dbReference>
<dbReference type="Pfam" id="PF00189">
    <property type="entry name" value="Ribosomal_S3_C"/>
    <property type="match status" value="1"/>
</dbReference>
<dbReference type="SMART" id="SM00322">
    <property type="entry name" value="KH"/>
    <property type="match status" value="1"/>
</dbReference>
<dbReference type="SUPFAM" id="SSF54814">
    <property type="entry name" value="Prokaryotic type KH domain (KH-domain type II)"/>
    <property type="match status" value="1"/>
</dbReference>
<dbReference type="SUPFAM" id="SSF54821">
    <property type="entry name" value="Ribosomal protein S3 C-terminal domain"/>
    <property type="match status" value="1"/>
</dbReference>
<dbReference type="PROSITE" id="PS50823">
    <property type="entry name" value="KH_TYPE_2"/>
    <property type="match status" value="1"/>
</dbReference>
<dbReference type="PROSITE" id="PS00548">
    <property type="entry name" value="RIBOSOMAL_S3"/>
    <property type="match status" value="1"/>
</dbReference>
<sequence>MGQKVHPIGMRIGVIRDWDSKWYAEKDYADFLHEDLRIRDYVAKRLSDASVSRVEIERAANRVNITIHTAKPGMVIGKGGSEVEALRKNLNELTQKRVHINIVEIKRADLDAKLVAENIARQLEGRVSFRRAQKQAIQRTMRAGAKGIKTQVSGRLGGADIARAEHYSEGTVPLHTLRADIDYAWEEADTTYGKLGVKVWIYRGEVLPTKKNNVEGGK</sequence>
<organism>
    <name type="scientific">Listeria monocytogenes serotype 4b (strain F2365)</name>
    <dbReference type="NCBI Taxonomy" id="265669"/>
    <lineage>
        <taxon>Bacteria</taxon>
        <taxon>Bacillati</taxon>
        <taxon>Bacillota</taxon>
        <taxon>Bacilli</taxon>
        <taxon>Bacillales</taxon>
        <taxon>Listeriaceae</taxon>
        <taxon>Listeria</taxon>
    </lineage>
</organism>
<gene>
    <name evidence="1" type="primary">rpsC</name>
    <name type="ordered locus">LMOf2365_2599</name>
</gene>
<feature type="chain" id="PRO_0000130143" description="Small ribosomal subunit protein uS3">
    <location>
        <begin position="1"/>
        <end position="218"/>
    </location>
</feature>
<feature type="domain" description="KH type-2" evidence="1">
    <location>
        <begin position="38"/>
        <end position="106"/>
    </location>
</feature>